<proteinExistence type="inferred from homology"/>
<protein>
    <recommendedName>
        <fullName evidence="1">Elongation factor Ts</fullName>
        <shortName evidence="1">EF-Ts</shortName>
    </recommendedName>
</protein>
<gene>
    <name evidence="1" type="primary">tsf</name>
    <name type="ordered locus">CJE1315</name>
</gene>
<dbReference type="EMBL" id="CP000025">
    <property type="protein sequence ID" value="AAW35636.1"/>
    <property type="molecule type" value="Genomic_DNA"/>
</dbReference>
<dbReference type="RefSeq" id="WP_002859268.1">
    <property type="nucleotide sequence ID" value="NC_003912.7"/>
</dbReference>
<dbReference type="SMR" id="Q5HTT3"/>
<dbReference type="KEGG" id="cjr:CJE1315"/>
<dbReference type="HOGENOM" id="CLU_047155_0_1_7"/>
<dbReference type="GO" id="GO:0005737">
    <property type="term" value="C:cytoplasm"/>
    <property type="evidence" value="ECO:0007669"/>
    <property type="project" value="UniProtKB-SubCell"/>
</dbReference>
<dbReference type="GO" id="GO:0003746">
    <property type="term" value="F:translation elongation factor activity"/>
    <property type="evidence" value="ECO:0007669"/>
    <property type="project" value="UniProtKB-UniRule"/>
</dbReference>
<dbReference type="CDD" id="cd14275">
    <property type="entry name" value="UBA_EF-Ts"/>
    <property type="match status" value="1"/>
</dbReference>
<dbReference type="FunFam" id="1.10.8.10:FF:000001">
    <property type="entry name" value="Elongation factor Ts"/>
    <property type="match status" value="1"/>
</dbReference>
<dbReference type="Gene3D" id="1.10.286.20">
    <property type="match status" value="1"/>
</dbReference>
<dbReference type="Gene3D" id="1.10.8.10">
    <property type="entry name" value="DNA helicase RuvA subunit, C-terminal domain"/>
    <property type="match status" value="1"/>
</dbReference>
<dbReference type="Gene3D" id="3.30.479.20">
    <property type="entry name" value="Elongation factor Ts, dimerisation domain"/>
    <property type="match status" value="2"/>
</dbReference>
<dbReference type="HAMAP" id="MF_00050">
    <property type="entry name" value="EF_Ts"/>
    <property type="match status" value="1"/>
</dbReference>
<dbReference type="InterPro" id="IPR036402">
    <property type="entry name" value="EF-Ts_dimer_sf"/>
</dbReference>
<dbReference type="InterPro" id="IPR001816">
    <property type="entry name" value="Transl_elong_EFTs/EF1B"/>
</dbReference>
<dbReference type="InterPro" id="IPR014039">
    <property type="entry name" value="Transl_elong_EFTs/EF1B_dimer"/>
</dbReference>
<dbReference type="InterPro" id="IPR018101">
    <property type="entry name" value="Transl_elong_Ts_CS"/>
</dbReference>
<dbReference type="InterPro" id="IPR009060">
    <property type="entry name" value="UBA-like_sf"/>
</dbReference>
<dbReference type="NCBIfam" id="TIGR00116">
    <property type="entry name" value="tsf"/>
    <property type="match status" value="1"/>
</dbReference>
<dbReference type="PANTHER" id="PTHR11741">
    <property type="entry name" value="ELONGATION FACTOR TS"/>
    <property type="match status" value="1"/>
</dbReference>
<dbReference type="PANTHER" id="PTHR11741:SF0">
    <property type="entry name" value="ELONGATION FACTOR TS, MITOCHONDRIAL"/>
    <property type="match status" value="1"/>
</dbReference>
<dbReference type="Pfam" id="PF00889">
    <property type="entry name" value="EF_TS"/>
    <property type="match status" value="2"/>
</dbReference>
<dbReference type="SUPFAM" id="SSF54713">
    <property type="entry name" value="Elongation factor Ts (EF-Ts), dimerisation domain"/>
    <property type="match status" value="3"/>
</dbReference>
<dbReference type="SUPFAM" id="SSF46934">
    <property type="entry name" value="UBA-like"/>
    <property type="match status" value="1"/>
</dbReference>
<dbReference type="PROSITE" id="PS01126">
    <property type="entry name" value="EF_TS_1"/>
    <property type="match status" value="1"/>
</dbReference>
<dbReference type="PROSITE" id="PS01127">
    <property type="entry name" value="EF_TS_2"/>
    <property type="match status" value="1"/>
</dbReference>
<name>EFTS_CAMJR</name>
<accession>Q5HTT3</accession>
<keyword id="KW-0963">Cytoplasm</keyword>
<keyword id="KW-0251">Elongation factor</keyword>
<keyword id="KW-0648">Protein biosynthesis</keyword>
<organism>
    <name type="scientific">Campylobacter jejuni (strain RM1221)</name>
    <dbReference type="NCBI Taxonomy" id="195099"/>
    <lineage>
        <taxon>Bacteria</taxon>
        <taxon>Pseudomonadati</taxon>
        <taxon>Campylobacterota</taxon>
        <taxon>Epsilonproteobacteria</taxon>
        <taxon>Campylobacterales</taxon>
        <taxon>Campylobacteraceae</taxon>
        <taxon>Campylobacter</taxon>
    </lineage>
</organism>
<evidence type="ECO:0000255" key="1">
    <source>
        <dbReference type="HAMAP-Rule" id="MF_00050"/>
    </source>
</evidence>
<sequence length="357" mass="39537">MAEITAAMVKELRESTGAGMMDCKNALSETNGDFDKAVQLLREKGLGKAAKKADRLAAEGLVSVKVSDDFTSATVSEINSETDFVAKNDQFIALTKDTTAHIQSNSLQSVEELHSSTINGVKFEEYLKSQIATIGENLVVRRFATLKAGANGVVNGYIHTNGRVGVVIAAACDSTEVASKSRDLLRQICMHIAAMRPSYLSYEDLDMTFVENEYKALVAELEKENEERRRLKDPNKPEHKIPQFASRKQLSDAILKEAEEKIKEELKAQGKPEKIWDNIIPGKMNSFIADNSQLDSKLTLMGQFYVLDDKKTVEQVIAEKEKEFGGKIKIVEFICFEVGEGLEKKTEDFAAEVAAQL</sequence>
<reference key="1">
    <citation type="journal article" date="2005" name="PLoS Biol.">
        <title>Major structural differences and novel potential virulence mechanisms from the genomes of multiple Campylobacter species.</title>
        <authorList>
            <person name="Fouts D.E."/>
            <person name="Mongodin E.F."/>
            <person name="Mandrell R.E."/>
            <person name="Miller W.G."/>
            <person name="Rasko D.A."/>
            <person name="Ravel J."/>
            <person name="Brinkac L.M."/>
            <person name="DeBoy R.T."/>
            <person name="Parker C.T."/>
            <person name="Daugherty S.C."/>
            <person name="Dodson R.J."/>
            <person name="Durkin A.S."/>
            <person name="Madupu R."/>
            <person name="Sullivan S.A."/>
            <person name="Shetty J.U."/>
            <person name="Ayodeji M.A."/>
            <person name="Shvartsbeyn A."/>
            <person name="Schatz M.C."/>
            <person name="Badger J.H."/>
            <person name="Fraser C.M."/>
            <person name="Nelson K.E."/>
        </authorList>
    </citation>
    <scope>NUCLEOTIDE SEQUENCE [LARGE SCALE GENOMIC DNA]</scope>
    <source>
        <strain>RM1221</strain>
    </source>
</reference>
<feature type="chain" id="PRO_0000161098" description="Elongation factor Ts">
    <location>
        <begin position="1"/>
        <end position="357"/>
    </location>
</feature>
<feature type="region of interest" description="Involved in Mg(2+) ion dislocation from EF-Tu" evidence="1">
    <location>
        <begin position="82"/>
        <end position="85"/>
    </location>
</feature>
<comment type="function">
    <text evidence="1">Associates with the EF-Tu.GDP complex and induces the exchange of GDP to GTP. It remains bound to the aminoacyl-tRNA.EF-Tu.GTP complex up to the GTP hydrolysis stage on the ribosome.</text>
</comment>
<comment type="subcellular location">
    <subcellularLocation>
        <location evidence="1">Cytoplasm</location>
    </subcellularLocation>
</comment>
<comment type="similarity">
    <text evidence="1">Belongs to the EF-Ts family.</text>
</comment>